<evidence type="ECO:0000255" key="1">
    <source>
        <dbReference type="HAMAP-Rule" id="MF_00108"/>
    </source>
</evidence>
<feature type="chain" id="PRO_1000191062" description="2-C-methyl-D-erythritol 4-phosphate cytidylyltransferase">
    <location>
        <begin position="1"/>
        <end position="235"/>
    </location>
</feature>
<feature type="site" description="Transition state stabilizer" evidence="1">
    <location>
        <position position="22"/>
    </location>
</feature>
<feature type="site" description="Transition state stabilizer" evidence="1">
    <location>
        <position position="29"/>
    </location>
</feature>
<feature type="site" description="Positions MEP for the nucleophilic attack" evidence="1">
    <location>
        <position position="160"/>
    </location>
</feature>
<feature type="site" description="Positions MEP for the nucleophilic attack" evidence="1">
    <location>
        <position position="214"/>
    </location>
</feature>
<protein>
    <recommendedName>
        <fullName evidence="1">2-C-methyl-D-erythritol 4-phosphate cytidylyltransferase</fullName>
        <ecNumber evidence="1">2.7.7.60</ecNumber>
    </recommendedName>
    <alternativeName>
        <fullName evidence="1">4-diphosphocytidyl-2C-methyl-D-erythritol synthase</fullName>
    </alternativeName>
    <alternativeName>
        <fullName evidence="1">MEP cytidylyltransferase</fullName>
        <shortName evidence="1">MCT</shortName>
    </alternativeName>
</protein>
<accession>Q04XR1</accession>
<comment type="function">
    <text evidence="1">Catalyzes the formation of 4-diphosphocytidyl-2-C-methyl-D-erythritol from CTP and 2-C-methyl-D-erythritol 4-phosphate (MEP).</text>
</comment>
<comment type="catalytic activity">
    <reaction evidence="1">
        <text>2-C-methyl-D-erythritol 4-phosphate + CTP + H(+) = 4-CDP-2-C-methyl-D-erythritol + diphosphate</text>
        <dbReference type="Rhea" id="RHEA:13429"/>
        <dbReference type="ChEBI" id="CHEBI:15378"/>
        <dbReference type="ChEBI" id="CHEBI:33019"/>
        <dbReference type="ChEBI" id="CHEBI:37563"/>
        <dbReference type="ChEBI" id="CHEBI:57823"/>
        <dbReference type="ChEBI" id="CHEBI:58262"/>
        <dbReference type="EC" id="2.7.7.60"/>
    </reaction>
</comment>
<comment type="pathway">
    <text evidence="1">Isoprenoid biosynthesis; isopentenyl diphosphate biosynthesis via DXP pathway; isopentenyl diphosphate from 1-deoxy-D-xylulose 5-phosphate: step 2/6.</text>
</comment>
<comment type="similarity">
    <text evidence="1">Belongs to the IspD/TarI cytidylyltransferase family. IspD subfamily.</text>
</comment>
<name>ISPD_LEPBL</name>
<reference key="1">
    <citation type="journal article" date="2006" name="Proc. Natl. Acad. Sci. U.S.A.">
        <title>Genome reduction in Leptospira borgpetersenii reflects limited transmission potential.</title>
        <authorList>
            <person name="Bulach D.M."/>
            <person name="Zuerner R.L."/>
            <person name="Wilson P."/>
            <person name="Seemann T."/>
            <person name="McGrath A."/>
            <person name="Cullen P.A."/>
            <person name="Davis J."/>
            <person name="Johnson M."/>
            <person name="Kuczek E."/>
            <person name="Alt D.P."/>
            <person name="Peterson-Burch B."/>
            <person name="Coppel R.L."/>
            <person name="Rood J.I."/>
            <person name="Davies J.K."/>
            <person name="Adler B."/>
        </authorList>
    </citation>
    <scope>NUCLEOTIDE SEQUENCE [LARGE SCALE GENOMIC DNA]</scope>
    <source>
        <strain>L550</strain>
    </source>
</reference>
<organism>
    <name type="scientific">Leptospira borgpetersenii serovar Hardjo-bovis (strain L550)</name>
    <dbReference type="NCBI Taxonomy" id="355276"/>
    <lineage>
        <taxon>Bacteria</taxon>
        <taxon>Pseudomonadati</taxon>
        <taxon>Spirochaetota</taxon>
        <taxon>Spirochaetia</taxon>
        <taxon>Leptospirales</taxon>
        <taxon>Leptospiraceae</taxon>
        <taxon>Leptospira</taxon>
    </lineage>
</organism>
<keyword id="KW-0414">Isoprene biosynthesis</keyword>
<keyword id="KW-0548">Nucleotidyltransferase</keyword>
<keyword id="KW-0808">Transferase</keyword>
<proteinExistence type="inferred from homology"/>
<dbReference type="EC" id="2.7.7.60" evidence="1"/>
<dbReference type="EMBL" id="CP000348">
    <property type="protein sequence ID" value="ABJ80134.1"/>
    <property type="molecule type" value="Genomic_DNA"/>
</dbReference>
<dbReference type="RefSeq" id="WP_002723910.1">
    <property type="nucleotide sequence ID" value="NC_008508.1"/>
</dbReference>
<dbReference type="SMR" id="Q04XR1"/>
<dbReference type="KEGG" id="lbl:LBL_2796"/>
<dbReference type="HOGENOM" id="CLU_061281_2_2_12"/>
<dbReference type="UniPathway" id="UPA00056">
    <property type="reaction ID" value="UER00093"/>
</dbReference>
<dbReference type="GO" id="GO:0005829">
    <property type="term" value="C:cytosol"/>
    <property type="evidence" value="ECO:0007669"/>
    <property type="project" value="TreeGrafter"/>
</dbReference>
<dbReference type="GO" id="GO:0050518">
    <property type="term" value="F:2-C-methyl-D-erythritol 4-phosphate cytidylyltransferase activity"/>
    <property type="evidence" value="ECO:0007669"/>
    <property type="project" value="UniProtKB-UniRule"/>
</dbReference>
<dbReference type="GO" id="GO:0019288">
    <property type="term" value="P:isopentenyl diphosphate biosynthetic process, methylerythritol 4-phosphate pathway"/>
    <property type="evidence" value="ECO:0007669"/>
    <property type="project" value="UniProtKB-UniRule"/>
</dbReference>
<dbReference type="CDD" id="cd02516">
    <property type="entry name" value="CDP-ME_synthetase"/>
    <property type="match status" value="1"/>
</dbReference>
<dbReference type="Gene3D" id="3.90.550.10">
    <property type="entry name" value="Spore Coat Polysaccharide Biosynthesis Protein SpsA, Chain A"/>
    <property type="match status" value="1"/>
</dbReference>
<dbReference type="HAMAP" id="MF_00108">
    <property type="entry name" value="IspD"/>
    <property type="match status" value="1"/>
</dbReference>
<dbReference type="InterPro" id="IPR001228">
    <property type="entry name" value="IspD"/>
</dbReference>
<dbReference type="InterPro" id="IPR034683">
    <property type="entry name" value="IspD/TarI"/>
</dbReference>
<dbReference type="InterPro" id="IPR029044">
    <property type="entry name" value="Nucleotide-diphossugar_trans"/>
</dbReference>
<dbReference type="PANTHER" id="PTHR43015">
    <property type="entry name" value="D-RIBITOL-5-PHOSPHATE CYTIDYLYLTRANSFERASE"/>
    <property type="match status" value="1"/>
</dbReference>
<dbReference type="PANTHER" id="PTHR43015:SF1">
    <property type="entry name" value="D-RIBITOL-5-PHOSPHATE CYTIDYLYLTRANSFERASE"/>
    <property type="match status" value="1"/>
</dbReference>
<dbReference type="Pfam" id="PF01128">
    <property type="entry name" value="IspD"/>
    <property type="match status" value="1"/>
</dbReference>
<dbReference type="SUPFAM" id="SSF53448">
    <property type="entry name" value="Nucleotide-diphospho-sugar transferases"/>
    <property type="match status" value="1"/>
</dbReference>
<gene>
    <name evidence="1" type="primary">ispD</name>
    <name type="ordered locus">LBL_2796</name>
</gene>
<sequence length="235" mass="26639">MKSLFLSEKIYVLILAGGTGTRMGSEIPKQFLEFSNEPILIHTLKKFQSWKKQKQIVLVSHPEFISETESICSPFLENQDCIIEGGETRHGSMLRGLSALTIQSEDILLIHDAARPFVLLKELDLLCENIRENGISTLASRTSETVLEESNGKTSSFLDREHIWFMKTPQGIRGDILKELLTLPMDPIPTDLCSWALTAGKKSSIVESHPFNLKITRKEDLELAEFYSDLFEKLR</sequence>